<proteinExistence type="inferred from homology"/>
<feature type="chain" id="PRO_0000324885" description="Protein PXR1">
    <location>
        <begin position="1"/>
        <end position="288"/>
    </location>
</feature>
<feature type="domain" description="G-patch" evidence="2">
    <location>
        <begin position="25"/>
        <end position="72"/>
    </location>
</feature>
<feature type="region of interest" description="Disordered" evidence="3">
    <location>
        <begin position="147"/>
        <end position="258"/>
    </location>
</feature>
<feature type="compositionally biased region" description="Acidic residues" evidence="3">
    <location>
        <begin position="157"/>
        <end position="166"/>
    </location>
</feature>
<feature type="compositionally biased region" description="Basic residues" evidence="3">
    <location>
        <begin position="169"/>
        <end position="185"/>
    </location>
</feature>
<feature type="compositionally biased region" description="Basic residues" evidence="3">
    <location>
        <begin position="195"/>
        <end position="214"/>
    </location>
</feature>
<feature type="compositionally biased region" description="Low complexity" evidence="3">
    <location>
        <begin position="238"/>
        <end position="256"/>
    </location>
</feature>
<keyword id="KW-0539">Nucleus</keyword>
<keyword id="KW-1185">Reference proteome</keyword>
<keyword id="KW-0690">Ribosome biogenesis</keyword>
<keyword id="KW-0698">rRNA processing</keyword>
<protein>
    <recommendedName>
        <fullName>Protein PXR1</fullName>
    </recommendedName>
    <alternativeName>
        <fullName>PinX1-related protein 1</fullName>
    </alternativeName>
</protein>
<evidence type="ECO:0000250" key="1"/>
<evidence type="ECO:0000255" key="2">
    <source>
        <dbReference type="PROSITE-ProRule" id="PRU00092"/>
    </source>
</evidence>
<evidence type="ECO:0000256" key="3">
    <source>
        <dbReference type="SAM" id="MobiDB-lite"/>
    </source>
</evidence>
<evidence type="ECO:0000305" key="4"/>
<reference key="1">
    <citation type="journal article" date="2004" name="Nature">
        <title>Genome evolution in yeasts.</title>
        <authorList>
            <person name="Dujon B."/>
            <person name="Sherman D."/>
            <person name="Fischer G."/>
            <person name="Durrens P."/>
            <person name="Casaregola S."/>
            <person name="Lafontaine I."/>
            <person name="de Montigny J."/>
            <person name="Marck C."/>
            <person name="Neuveglise C."/>
            <person name="Talla E."/>
            <person name="Goffard N."/>
            <person name="Frangeul L."/>
            <person name="Aigle M."/>
            <person name="Anthouard V."/>
            <person name="Babour A."/>
            <person name="Barbe V."/>
            <person name="Barnay S."/>
            <person name="Blanchin S."/>
            <person name="Beckerich J.-M."/>
            <person name="Beyne E."/>
            <person name="Bleykasten C."/>
            <person name="Boisrame A."/>
            <person name="Boyer J."/>
            <person name="Cattolico L."/>
            <person name="Confanioleri F."/>
            <person name="de Daruvar A."/>
            <person name="Despons L."/>
            <person name="Fabre E."/>
            <person name="Fairhead C."/>
            <person name="Ferry-Dumazet H."/>
            <person name="Groppi A."/>
            <person name="Hantraye F."/>
            <person name="Hennequin C."/>
            <person name="Jauniaux N."/>
            <person name="Joyet P."/>
            <person name="Kachouri R."/>
            <person name="Kerrest A."/>
            <person name="Koszul R."/>
            <person name="Lemaire M."/>
            <person name="Lesur I."/>
            <person name="Ma L."/>
            <person name="Muller H."/>
            <person name="Nicaud J.-M."/>
            <person name="Nikolski M."/>
            <person name="Oztas S."/>
            <person name="Ozier-Kalogeropoulos O."/>
            <person name="Pellenz S."/>
            <person name="Potier S."/>
            <person name="Richard G.-F."/>
            <person name="Straub M.-L."/>
            <person name="Suleau A."/>
            <person name="Swennen D."/>
            <person name="Tekaia F."/>
            <person name="Wesolowski-Louvel M."/>
            <person name="Westhof E."/>
            <person name="Wirth B."/>
            <person name="Zeniou-Meyer M."/>
            <person name="Zivanovic Y."/>
            <person name="Bolotin-Fukuhara M."/>
            <person name="Thierry A."/>
            <person name="Bouchier C."/>
            <person name="Caudron B."/>
            <person name="Scarpelli C."/>
            <person name="Gaillardin C."/>
            <person name="Weissenbach J."/>
            <person name="Wincker P."/>
            <person name="Souciet J.-L."/>
        </authorList>
    </citation>
    <scope>NUCLEOTIDE SEQUENCE [LARGE SCALE GENOMIC DNA]</scope>
    <source>
        <strain>ATCC 2001 / BCRC 20586 / JCM 3761 / NBRC 0622 / NRRL Y-65 / CBS 138</strain>
    </source>
</reference>
<dbReference type="EMBL" id="CR380953">
    <property type="protein sequence ID" value="CAG59303.1"/>
    <property type="molecule type" value="Genomic_DNA"/>
</dbReference>
<dbReference type="RefSeq" id="XP_446376.1">
    <property type="nucleotide sequence ID" value="XM_446376.1"/>
</dbReference>
<dbReference type="FunCoup" id="Q6FTR8">
    <property type="interactions" value="268"/>
</dbReference>
<dbReference type="STRING" id="284593.Q6FTR8"/>
<dbReference type="EnsemblFungi" id="CAGL0G00264g-T">
    <property type="protein sequence ID" value="CAGL0G00264g-T-p1"/>
    <property type="gene ID" value="CAGL0G00264g"/>
</dbReference>
<dbReference type="KEGG" id="cgr:2888416"/>
<dbReference type="CGD" id="CAL0129340">
    <property type="gene designation" value="CAGL0G00264g"/>
</dbReference>
<dbReference type="VEuPathDB" id="FungiDB:CAGL0G00264g"/>
<dbReference type="eggNOG" id="KOG2809">
    <property type="taxonomic scope" value="Eukaryota"/>
</dbReference>
<dbReference type="HOGENOM" id="CLU_052839_0_0_1"/>
<dbReference type="InParanoid" id="Q6FTR8"/>
<dbReference type="Proteomes" id="UP000002428">
    <property type="component" value="Chromosome G"/>
</dbReference>
<dbReference type="GO" id="GO:0005730">
    <property type="term" value="C:nucleolus"/>
    <property type="evidence" value="ECO:0007669"/>
    <property type="project" value="UniProtKB-SubCell"/>
</dbReference>
<dbReference type="GO" id="GO:0005654">
    <property type="term" value="C:nucleoplasm"/>
    <property type="evidence" value="ECO:0007669"/>
    <property type="project" value="EnsemblFungi"/>
</dbReference>
<dbReference type="GO" id="GO:0032040">
    <property type="term" value="C:small-subunit processome"/>
    <property type="evidence" value="ECO:0007669"/>
    <property type="project" value="EnsemblFungi"/>
</dbReference>
<dbReference type="GO" id="GO:0008047">
    <property type="term" value="F:enzyme activator activity"/>
    <property type="evidence" value="ECO:0007669"/>
    <property type="project" value="EnsemblFungi"/>
</dbReference>
<dbReference type="GO" id="GO:0003676">
    <property type="term" value="F:nucleic acid binding"/>
    <property type="evidence" value="ECO:0007669"/>
    <property type="project" value="InterPro"/>
</dbReference>
<dbReference type="GO" id="GO:0010521">
    <property type="term" value="F:telomerase inhibitor activity"/>
    <property type="evidence" value="ECO:0007669"/>
    <property type="project" value="EnsemblFungi"/>
</dbReference>
<dbReference type="GO" id="GO:0000494">
    <property type="term" value="P:box C/D sno(s)RNA 3'-end processing"/>
    <property type="evidence" value="ECO:0007669"/>
    <property type="project" value="EnsemblFungi"/>
</dbReference>
<dbReference type="GO" id="GO:0032211">
    <property type="term" value="P:negative regulation of telomere maintenance via telomerase"/>
    <property type="evidence" value="ECO:0007669"/>
    <property type="project" value="EnsemblFungi"/>
</dbReference>
<dbReference type="GO" id="GO:0006364">
    <property type="term" value="P:rRNA processing"/>
    <property type="evidence" value="ECO:0007669"/>
    <property type="project" value="UniProtKB-KW"/>
</dbReference>
<dbReference type="InterPro" id="IPR000467">
    <property type="entry name" value="G_patch_dom"/>
</dbReference>
<dbReference type="InterPro" id="IPR050656">
    <property type="entry name" value="PINX1"/>
</dbReference>
<dbReference type="PANTHER" id="PTHR23149">
    <property type="entry name" value="G PATCH DOMAIN CONTAINING PROTEIN"/>
    <property type="match status" value="1"/>
</dbReference>
<dbReference type="PANTHER" id="PTHR23149:SF31">
    <property type="entry name" value="PROTEIN PXR1"/>
    <property type="match status" value="1"/>
</dbReference>
<dbReference type="Pfam" id="PF01585">
    <property type="entry name" value="G-patch"/>
    <property type="match status" value="1"/>
</dbReference>
<dbReference type="SMART" id="SM00443">
    <property type="entry name" value="G_patch"/>
    <property type="match status" value="1"/>
</dbReference>
<dbReference type="PROSITE" id="PS50174">
    <property type="entry name" value="G_PATCH"/>
    <property type="match status" value="1"/>
</dbReference>
<name>PXR1_CANGA</name>
<accession>Q6FTR8</accession>
<organism>
    <name type="scientific">Candida glabrata (strain ATCC 2001 / BCRC 20586 / JCM 3761 / NBRC 0622 / NRRL Y-65 / CBS 138)</name>
    <name type="common">Yeast</name>
    <name type="synonym">Nakaseomyces glabratus</name>
    <dbReference type="NCBI Taxonomy" id="284593"/>
    <lineage>
        <taxon>Eukaryota</taxon>
        <taxon>Fungi</taxon>
        <taxon>Dikarya</taxon>
        <taxon>Ascomycota</taxon>
        <taxon>Saccharomycotina</taxon>
        <taxon>Saccharomycetes</taxon>
        <taxon>Saccharomycetales</taxon>
        <taxon>Saccharomycetaceae</taxon>
        <taxon>Nakaseomyces</taxon>
    </lineage>
</organism>
<sequence>MGLAAVKTRQKFGLDPRNTAWSNDQSRFGHKHLMRFGWQPGQGLGTQPVQSMKTHIKVSIKDDNLGLGAKLKKNKGDKIDEFDNGECAGLDVFQRILGRLNGKETEVNKELEIQRKDKILNGKWGVHFVKGDTLASTWDPKTKKLLSYSQMEKDSSSDEESDDDEDEKKKHKIEKKEAKKSKKRKRDSESDSESKKKKKSKKDKKEKKSKKDKKNKKEKESKKDKKSKHKKDKKQEIRTASIESSTSATSIPESVSTRLSVRSKWIKQKRAAVMDSKALNEIFMVTGN</sequence>
<gene>
    <name type="primary">PXR1</name>
    <name type="ordered locus">CAGL0G00264g</name>
</gene>
<comment type="function">
    <text evidence="1">Involved in rRNA-processing at A0, A1 and A2 sites and negatively regulates telomerase.</text>
</comment>
<comment type="subcellular location">
    <subcellularLocation>
        <location evidence="1">Nucleus</location>
        <location evidence="1">Nucleolus</location>
    </subcellularLocation>
</comment>
<comment type="similarity">
    <text evidence="4">Belongs to the PINX1 family.</text>
</comment>